<proteinExistence type="evidence at transcript level"/>
<feature type="signal peptide" evidence="1">
    <location>
        <begin position="1"/>
        <end position="25"/>
    </location>
</feature>
<feature type="chain" id="PRO_5004157622" description="Dormancy-associated protein 2" evidence="1">
    <location>
        <begin position="26"/>
        <end position="129"/>
    </location>
</feature>
<feature type="region of interest" description="Disordered" evidence="2">
    <location>
        <begin position="110"/>
        <end position="129"/>
    </location>
</feature>
<protein>
    <recommendedName>
        <fullName evidence="4">Dormancy-associated protein 2</fullName>
        <shortName evidence="4">PsDRM2</shortName>
    </recommendedName>
</protein>
<keyword id="KW-0217">Developmental protein</keyword>
<keyword id="KW-0732">Signal</keyword>
<dbReference type="EMBL" id="AF029243">
    <property type="protein sequence ID" value="AAB84194.1"/>
    <property type="molecule type" value="mRNA"/>
</dbReference>
<dbReference type="PIR" id="T06256">
    <property type="entry name" value="T06256"/>
</dbReference>
<dbReference type="EnsemblPlants" id="Psat2g028520.1">
    <property type="protein sequence ID" value="Psat2g028520.1.cds"/>
    <property type="gene ID" value="Psat2g028520"/>
</dbReference>
<dbReference type="Gramene" id="Psat2g028520.1">
    <property type="protein sequence ID" value="Psat2g028520.1.cds"/>
    <property type="gene ID" value="Psat2g028520"/>
</dbReference>
<dbReference type="InterPro" id="IPR010800">
    <property type="entry name" value="GRP"/>
</dbReference>
<dbReference type="PANTHER" id="PTHR37389">
    <property type="entry name" value="NODULIN-24"/>
    <property type="match status" value="1"/>
</dbReference>
<dbReference type="PANTHER" id="PTHR37389:SF40">
    <property type="entry name" value="NODULIN-24"/>
    <property type="match status" value="1"/>
</dbReference>
<dbReference type="Pfam" id="PF07172">
    <property type="entry name" value="GRP"/>
    <property type="match status" value="1"/>
</dbReference>
<gene>
    <name evidence="4" type="primary">DRM2</name>
</gene>
<comment type="tissue specificity">
    <text evidence="3">Expressed in axilary buds. Detected in growing stems, leaflets and floral organs, but not in roots.</text>
</comment>
<comment type="induction">
    <text evidence="3">Down-regulated in axillary buds within 15 hours after decapitation and then up-regulated.</text>
</comment>
<comment type="similarity">
    <text evidence="5">Belongs to the DRM1/ARP family.</text>
</comment>
<evidence type="ECO:0000255" key="1"/>
<evidence type="ECO:0000256" key="2">
    <source>
        <dbReference type="SAM" id="MobiDB-lite"/>
    </source>
</evidence>
<evidence type="ECO:0000269" key="3">
    <source>
    </source>
</evidence>
<evidence type="ECO:0000303" key="4">
    <source>
    </source>
</evidence>
<evidence type="ECO:0000305" key="5"/>
<evidence type="ECO:0000312" key="6">
    <source>
        <dbReference type="EMBL" id="AAB84194.1"/>
    </source>
</evidence>
<reference key="1">
    <citation type="journal article" date="1998" name="Planta">
        <title>Dormancy-associated gene expression in pea axillary buds. Cloning and expression of PsDRM1 and PsDRM2.</title>
        <authorList>
            <person name="Stafstrom J.P."/>
            <person name="Ripley B.D."/>
            <person name="Devitt M.L."/>
            <person name="Drake B."/>
        </authorList>
    </citation>
    <scope>NUCLEOTIDE SEQUENCE [MRNA]</scope>
    <scope>TISSUE SPECIFICITY</scope>
    <scope>INDUCTION BY DECAPITATION</scope>
    <source>
        <strain>cv. Alaska</strain>
    </source>
</reference>
<sequence length="129" mass="12463">MDSRKAMLILGLLAMVLLISSEVSARELTEEVVEKSDEVNDAKYGGYGRGGGYHNGGGYHNGGGGYNGGGGYHNGGGGYNGGGGYHNGGGGYHNGGGGYNGGGGYHNGGGGYHGGGGHGGHGGASNNGN</sequence>
<name>DRM2_PEA</name>
<organism evidence="6">
    <name type="scientific">Pisum sativum</name>
    <name type="common">Garden pea</name>
    <name type="synonym">Lathyrus oleraceus</name>
    <dbReference type="NCBI Taxonomy" id="3888"/>
    <lineage>
        <taxon>Eukaryota</taxon>
        <taxon>Viridiplantae</taxon>
        <taxon>Streptophyta</taxon>
        <taxon>Embryophyta</taxon>
        <taxon>Tracheophyta</taxon>
        <taxon>Spermatophyta</taxon>
        <taxon>Magnoliopsida</taxon>
        <taxon>eudicotyledons</taxon>
        <taxon>Gunneridae</taxon>
        <taxon>Pentapetalae</taxon>
        <taxon>rosids</taxon>
        <taxon>fabids</taxon>
        <taxon>Fabales</taxon>
        <taxon>Fabaceae</taxon>
        <taxon>Papilionoideae</taxon>
        <taxon>50 kb inversion clade</taxon>
        <taxon>NPAAA clade</taxon>
        <taxon>Hologalegina</taxon>
        <taxon>IRL clade</taxon>
        <taxon>Fabeae</taxon>
        <taxon>Pisum</taxon>
    </lineage>
</organism>
<accession>O22612</accession>